<dbReference type="EC" id="1.2.1.70" evidence="1"/>
<dbReference type="EMBL" id="CP000151">
    <property type="protein sequence ID" value="ABB07199.1"/>
    <property type="molecule type" value="Genomic_DNA"/>
</dbReference>
<dbReference type="RefSeq" id="WP_011350794.1">
    <property type="nucleotide sequence ID" value="NZ_WNDV01000027.1"/>
</dbReference>
<dbReference type="SMR" id="Q39K17"/>
<dbReference type="GeneID" id="45093507"/>
<dbReference type="KEGG" id="bur:Bcep18194_A3598"/>
<dbReference type="PATRIC" id="fig|482957.22.peg.447"/>
<dbReference type="HOGENOM" id="CLU_035113_2_2_4"/>
<dbReference type="UniPathway" id="UPA00251">
    <property type="reaction ID" value="UER00316"/>
</dbReference>
<dbReference type="Proteomes" id="UP000002705">
    <property type="component" value="Chromosome 1"/>
</dbReference>
<dbReference type="GO" id="GO:0008883">
    <property type="term" value="F:glutamyl-tRNA reductase activity"/>
    <property type="evidence" value="ECO:0007669"/>
    <property type="project" value="UniProtKB-UniRule"/>
</dbReference>
<dbReference type="GO" id="GO:0050661">
    <property type="term" value="F:NADP binding"/>
    <property type="evidence" value="ECO:0007669"/>
    <property type="project" value="InterPro"/>
</dbReference>
<dbReference type="GO" id="GO:0019353">
    <property type="term" value="P:protoporphyrinogen IX biosynthetic process from glutamate"/>
    <property type="evidence" value="ECO:0007669"/>
    <property type="project" value="TreeGrafter"/>
</dbReference>
<dbReference type="CDD" id="cd05213">
    <property type="entry name" value="NAD_bind_Glutamyl_tRNA_reduct"/>
    <property type="match status" value="1"/>
</dbReference>
<dbReference type="FunFam" id="3.30.460.30:FF:000001">
    <property type="entry name" value="Glutamyl-tRNA reductase"/>
    <property type="match status" value="1"/>
</dbReference>
<dbReference type="FunFam" id="3.40.50.720:FF:000031">
    <property type="entry name" value="Glutamyl-tRNA reductase"/>
    <property type="match status" value="1"/>
</dbReference>
<dbReference type="Gene3D" id="3.30.460.30">
    <property type="entry name" value="Glutamyl-tRNA reductase, N-terminal domain"/>
    <property type="match status" value="1"/>
</dbReference>
<dbReference type="Gene3D" id="3.40.50.720">
    <property type="entry name" value="NAD(P)-binding Rossmann-like Domain"/>
    <property type="match status" value="1"/>
</dbReference>
<dbReference type="HAMAP" id="MF_00087">
    <property type="entry name" value="Glu_tRNA_reductase"/>
    <property type="match status" value="1"/>
</dbReference>
<dbReference type="InterPro" id="IPR000343">
    <property type="entry name" value="4pyrrol_synth_GluRdtase"/>
</dbReference>
<dbReference type="InterPro" id="IPR015896">
    <property type="entry name" value="4pyrrol_synth_GluRdtase_dimer"/>
</dbReference>
<dbReference type="InterPro" id="IPR015895">
    <property type="entry name" value="4pyrrol_synth_GluRdtase_N"/>
</dbReference>
<dbReference type="InterPro" id="IPR018214">
    <property type="entry name" value="GluRdtase_CS"/>
</dbReference>
<dbReference type="InterPro" id="IPR036453">
    <property type="entry name" value="GluRdtase_dimer_dom_sf"/>
</dbReference>
<dbReference type="InterPro" id="IPR036343">
    <property type="entry name" value="GluRdtase_N_sf"/>
</dbReference>
<dbReference type="InterPro" id="IPR036291">
    <property type="entry name" value="NAD(P)-bd_dom_sf"/>
</dbReference>
<dbReference type="InterPro" id="IPR006151">
    <property type="entry name" value="Shikm_DH/Glu-tRNA_Rdtase"/>
</dbReference>
<dbReference type="NCBIfam" id="TIGR01035">
    <property type="entry name" value="hemA"/>
    <property type="match status" value="1"/>
</dbReference>
<dbReference type="PANTHER" id="PTHR43013">
    <property type="entry name" value="GLUTAMYL-TRNA REDUCTASE"/>
    <property type="match status" value="1"/>
</dbReference>
<dbReference type="PANTHER" id="PTHR43013:SF1">
    <property type="entry name" value="GLUTAMYL-TRNA REDUCTASE"/>
    <property type="match status" value="1"/>
</dbReference>
<dbReference type="Pfam" id="PF00745">
    <property type="entry name" value="GlutR_dimer"/>
    <property type="match status" value="1"/>
</dbReference>
<dbReference type="Pfam" id="PF05201">
    <property type="entry name" value="GlutR_N"/>
    <property type="match status" value="1"/>
</dbReference>
<dbReference type="Pfam" id="PF01488">
    <property type="entry name" value="Shikimate_DH"/>
    <property type="match status" value="1"/>
</dbReference>
<dbReference type="PIRSF" id="PIRSF000445">
    <property type="entry name" value="4pyrrol_synth_GluRdtase"/>
    <property type="match status" value="1"/>
</dbReference>
<dbReference type="SUPFAM" id="SSF69742">
    <property type="entry name" value="Glutamyl tRNA-reductase catalytic, N-terminal domain"/>
    <property type="match status" value="1"/>
</dbReference>
<dbReference type="SUPFAM" id="SSF69075">
    <property type="entry name" value="Glutamyl tRNA-reductase dimerization domain"/>
    <property type="match status" value="1"/>
</dbReference>
<dbReference type="SUPFAM" id="SSF51735">
    <property type="entry name" value="NAD(P)-binding Rossmann-fold domains"/>
    <property type="match status" value="1"/>
</dbReference>
<dbReference type="PROSITE" id="PS00747">
    <property type="entry name" value="GLUTR"/>
    <property type="match status" value="1"/>
</dbReference>
<protein>
    <recommendedName>
        <fullName evidence="1">Glutamyl-tRNA reductase</fullName>
        <shortName evidence="1">GluTR</shortName>
        <ecNumber evidence="1">1.2.1.70</ecNumber>
    </recommendedName>
</protein>
<organism>
    <name type="scientific">Burkholderia lata (strain ATCC 17760 / DSM 23089 / LMG 22485 / NCIMB 9086 / R18194 / 383)</name>
    <dbReference type="NCBI Taxonomy" id="482957"/>
    <lineage>
        <taxon>Bacteria</taxon>
        <taxon>Pseudomonadati</taxon>
        <taxon>Pseudomonadota</taxon>
        <taxon>Betaproteobacteria</taxon>
        <taxon>Burkholderiales</taxon>
        <taxon>Burkholderiaceae</taxon>
        <taxon>Burkholderia</taxon>
        <taxon>Burkholderia cepacia complex</taxon>
    </lineage>
</organism>
<gene>
    <name evidence="1" type="primary">hemA</name>
    <name type="ordered locus">Bcep18194_A3598</name>
</gene>
<evidence type="ECO:0000255" key="1">
    <source>
        <dbReference type="HAMAP-Rule" id="MF_00087"/>
    </source>
</evidence>
<name>HEM1_BURL3</name>
<proteinExistence type="inferred from homology"/>
<keyword id="KW-0521">NADP</keyword>
<keyword id="KW-0560">Oxidoreductase</keyword>
<keyword id="KW-0627">Porphyrin biosynthesis</keyword>
<reference key="1">
    <citation type="submission" date="2005-10" db="EMBL/GenBank/DDBJ databases">
        <title>Complete sequence of chromosome 1 of Burkholderia sp. 383.</title>
        <authorList>
            <consortium name="US DOE Joint Genome Institute"/>
            <person name="Copeland A."/>
            <person name="Lucas S."/>
            <person name="Lapidus A."/>
            <person name="Barry K."/>
            <person name="Detter J.C."/>
            <person name="Glavina T."/>
            <person name="Hammon N."/>
            <person name="Israni S."/>
            <person name="Pitluck S."/>
            <person name="Chain P."/>
            <person name="Malfatti S."/>
            <person name="Shin M."/>
            <person name="Vergez L."/>
            <person name="Schmutz J."/>
            <person name="Larimer F."/>
            <person name="Land M."/>
            <person name="Kyrpides N."/>
            <person name="Lykidis A."/>
            <person name="Richardson P."/>
        </authorList>
    </citation>
    <scope>NUCLEOTIDE SEQUENCE [LARGE SCALE GENOMIC DNA]</scope>
    <source>
        <strain>ATCC 17760 / DSM 23089 / LMG 22485 / NCIMB 9086 / R18194 / 383</strain>
    </source>
</reference>
<feature type="chain" id="PRO_1000004600" description="Glutamyl-tRNA reductase">
    <location>
        <begin position="1"/>
        <end position="432"/>
    </location>
</feature>
<feature type="active site" description="Nucleophile" evidence="1">
    <location>
        <position position="56"/>
    </location>
</feature>
<feature type="binding site" evidence="1">
    <location>
        <begin position="55"/>
        <end position="58"/>
    </location>
    <ligand>
        <name>substrate</name>
    </ligand>
</feature>
<feature type="binding site" evidence="1">
    <location>
        <position position="114"/>
    </location>
    <ligand>
        <name>substrate</name>
    </ligand>
</feature>
<feature type="binding site" evidence="1">
    <location>
        <begin position="119"/>
        <end position="121"/>
    </location>
    <ligand>
        <name>substrate</name>
    </ligand>
</feature>
<feature type="binding site" evidence="1">
    <location>
        <position position="125"/>
    </location>
    <ligand>
        <name>substrate</name>
    </ligand>
</feature>
<feature type="binding site" evidence="1">
    <location>
        <begin position="194"/>
        <end position="199"/>
    </location>
    <ligand>
        <name>NADP(+)</name>
        <dbReference type="ChEBI" id="CHEBI:58349"/>
    </ligand>
</feature>
<feature type="site" description="Important for activity" evidence="1">
    <location>
        <position position="104"/>
    </location>
</feature>
<comment type="function">
    <text evidence="1">Catalyzes the NADPH-dependent reduction of glutamyl-tRNA(Glu) to glutamate 1-semialdehyde (GSA).</text>
</comment>
<comment type="catalytic activity">
    <reaction evidence="1">
        <text>(S)-4-amino-5-oxopentanoate + tRNA(Glu) + NADP(+) = L-glutamyl-tRNA(Glu) + NADPH + H(+)</text>
        <dbReference type="Rhea" id="RHEA:12344"/>
        <dbReference type="Rhea" id="RHEA-COMP:9663"/>
        <dbReference type="Rhea" id="RHEA-COMP:9680"/>
        <dbReference type="ChEBI" id="CHEBI:15378"/>
        <dbReference type="ChEBI" id="CHEBI:57501"/>
        <dbReference type="ChEBI" id="CHEBI:57783"/>
        <dbReference type="ChEBI" id="CHEBI:58349"/>
        <dbReference type="ChEBI" id="CHEBI:78442"/>
        <dbReference type="ChEBI" id="CHEBI:78520"/>
        <dbReference type="EC" id="1.2.1.70"/>
    </reaction>
</comment>
<comment type="pathway">
    <text evidence="1">Porphyrin-containing compound metabolism; protoporphyrin-IX biosynthesis; 5-aminolevulinate from L-glutamyl-tRNA(Glu): step 1/2.</text>
</comment>
<comment type="subunit">
    <text evidence="1">Homodimer.</text>
</comment>
<comment type="domain">
    <text evidence="1">Possesses an unusual extended V-shaped dimeric structure with each monomer consisting of three distinct domains arranged along a curved 'spinal' alpha-helix. The N-terminal catalytic domain specifically recognizes the glutamate moiety of the substrate. The second domain is the NADPH-binding domain, and the third C-terminal domain is responsible for dimerization.</text>
</comment>
<comment type="miscellaneous">
    <text evidence="1">During catalysis, the active site Cys acts as a nucleophile attacking the alpha-carbonyl group of tRNA-bound glutamate with the formation of a thioester intermediate between enzyme and glutamate, and the concomitant release of tRNA(Glu). The thioester intermediate is finally reduced by direct hydride transfer from NADPH, to form the product GSA.</text>
</comment>
<comment type="similarity">
    <text evidence="1">Belongs to the glutamyl-tRNA reductase family.</text>
</comment>
<accession>Q39K17</accession>
<sequence length="432" mass="47477">MQLLTIGINHHTAPVALRERVAFPLEQIKPALVTFKNVFLGPQAPNTPEAAILSTCNRTELYCATDDRAAREGAVRWLSEYHRIPVDELAPHVYALPQSEAVRHAFRVASGLDSMVLGETQILGQMKDAVRTATEAGALGTYLNQLFQRTFAVAKEVRGTTEIGTQSVSMAAAAVRLAQRIFEKVSDQRVLFIGAGEMIELCATHFAAQGPRELVVANRTAERGQRLAERFNGRAMPLADLPTRMHEFDIIVSCTASTLPIIGLGAVERAVKARRHRPIFMVDLAVPRDIEPEVGKLKDVFLYTVDDLGAIVREGNASRQAAVAQAEAIIETRVQNFMQWLDTRSVVPVIRHMHTQADALRRAEVDKAQKLLARGDDPAAVLEALSQALTNKLIHGPTSALNRVNGADRDSLIDLMRGFYQHAPRSNDQSGH</sequence>